<name>MUTS_ECOLC</name>
<comment type="function">
    <text evidence="1">This protein is involved in the repair of mismatches in DNA. It is possible that it carries out the mismatch recognition step. This protein has a weak ATPase activity.</text>
</comment>
<comment type="similarity">
    <text evidence="1">Belongs to the DNA mismatch repair MutS family.</text>
</comment>
<accession>B1IUU6</accession>
<proteinExistence type="inferred from homology"/>
<organism>
    <name type="scientific">Escherichia coli (strain ATCC 8739 / DSM 1576 / NBRC 3972 / NCIMB 8545 / WDCM 00012 / Crooks)</name>
    <dbReference type="NCBI Taxonomy" id="481805"/>
    <lineage>
        <taxon>Bacteria</taxon>
        <taxon>Pseudomonadati</taxon>
        <taxon>Pseudomonadota</taxon>
        <taxon>Gammaproteobacteria</taxon>
        <taxon>Enterobacterales</taxon>
        <taxon>Enterobacteriaceae</taxon>
        <taxon>Escherichia</taxon>
    </lineage>
</organism>
<sequence>MSAIENFDAHTPMMQQYLRLKAQHPEILLFYRMGDFYELFYDDAKRASQLLDISLTKRGASAGEPIPMAGIPYHAVENYLAKLVNQGESVAICEQIGDPATSKGPVERKVVRIVTPGTISDEALLQERQDNLLAAIWQDSKGFGYATLDISSGRFRLSEPADRETMAAELQRTNPAELLYAEDFAEMSLIEGRRGLRRRPLWEFEIDTARQQLNLQFGTRDLVGFGVENAPRGLCAAGCLLQYAKDTQRTTLPHIRSITMEREQDSIIMDAATRRNLEITQNLAGGAENTLASVLDCTVTPMGSRMLKRWLHMPVRDTRVLLERQQTIGALQDFTAGLQPVLRQVGDLERILARLALRTARPRDLARMRHAFQQLPELRAQLETVDSAPVQALREKMGEFAELRDLLERAIIDTPPVLVRDGGVIASGYNEELDEWRALADGATDYLERLEVRERERTGLDTLKVGFNAVHGYYIQISRGQSHLAPINYMRRQTLKNAERYIIPELKEYEDKVLTSKGKALALEKQLYEELFDLLLPHLEALQQSASALAELDVLVNLAERAYTLNYTCPTFIDKPGIRITEGRHPVVEQVLNEPFIANPLNLSPQRRMLIITGPNMGGKSTYMRQTALIALMAYIGSYVPAQKVEIGPIDRIFTRVGAADDLASGRSTFMVEMTETANILHNATEYSLVLMDEIGRGTSTYDGLSLAWACAENLANKIKALTLFATHYFELTQLPEKMEGVANVHLDALEHGDTIAFMHSVQDGAASKSYGLAVAALAGVPKEVIKRARQKLRELESISPNAAATQVDGTQMSLLSVPEETSPAVEALENLDPDSLTPRQALEWIYRLKSLV</sequence>
<reference key="1">
    <citation type="submission" date="2008-02" db="EMBL/GenBank/DDBJ databases">
        <title>Complete sequence of Escherichia coli C str. ATCC 8739.</title>
        <authorList>
            <person name="Copeland A."/>
            <person name="Lucas S."/>
            <person name="Lapidus A."/>
            <person name="Glavina del Rio T."/>
            <person name="Dalin E."/>
            <person name="Tice H."/>
            <person name="Bruce D."/>
            <person name="Goodwin L."/>
            <person name="Pitluck S."/>
            <person name="Kiss H."/>
            <person name="Brettin T."/>
            <person name="Detter J.C."/>
            <person name="Han C."/>
            <person name="Kuske C.R."/>
            <person name="Schmutz J."/>
            <person name="Larimer F."/>
            <person name="Land M."/>
            <person name="Hauser L."/>
            <person name="Kyrpides N."/>
            <person name="Mikhailova N."/>
            <person name="Ingram L."/>
            <person name="Richardson P."/>
        </authorList>
    </citation>
    <scope>NUCLEOTIDE SEQUENCE [LARGE SCALE GENOMIC DNA]</scope>
    <source>
        <strain>ATCC 8739 / DSM 1576 / NBRC 3972 / NCIMB 8545 / WDCM 00012 / Crooks</strain>
    </source>
</reference>
<keyword id="KW-0067">ATP-binding</keyword>
<keyword id="KW-0227">DNA damage</keyword>
<keyword id="KW-0234">DNA repair</keyword>
<keyword id="KW-0238">DNA-binding</keyword>
<keyword id="KW-0547">Nucleotide-binding</keyword>
<protein>
    <recommendedName>
        <fullName evidence="1">DNA mismatch repair protein MutS</fullName>
    </recommendedName>
</protein>
<dbReference type="EMBL" id="CP000946">
    <property type="protein sequence ID" value="ACA76648.1"/>
    <property type="molecule type" value="Genomic_DNA"/>
</dbReference>
<dbReference type="RefSeq" id="WP_001272928.1">
    <property type="nucleotide sequence ID" value="NZ_MTFT01000026.1"/>
</dbReference>
<dbReference type="SMR" id="B1IUU6"/>
<dbReference type="KEGG" id="ecl:EcolC_0979"/>
<dbReference type="HOGENOM" id="CLU_002472_4_0_6"/>
<dbReference type="GO" id="GO:0005829">
    <property type="term" value="C:cytosol"/>
    <property type="evidence" value="ECO:0007669"/>
    <property type="project" value="TreeGrafter"/>
</dbReference>
<dbReference type="GO" id="GO:0005524">
    <property type="term" value="F:ATP binding"/>
    <property type="evidence" value="ECO:0007669"/>
    <property type="project" value="UniProtKB-UniRule"/>
</dbReference>
<dbReference type="GO" id="GO:0140664">
    <property type="term" value="F:ATP-dependent DNA damage sensor activity"/>
    <property type="evidence" value="ECO:0007669"/>
    <property type="project" value="InterPro"/>
</dbReference>
<dbReference type="GO" id="GO:0003684">
    <property type="term" value="F:damaged DNA binding"/>
    <property type="evidence" value="ECO:0007669"/>
    <property type="project" value="UniProtKB-UniRule"/>
</dbReference>
<dbReference type="GO" id="GO:0030983">
    <property type="term" value="F:mismatched DNA binding"/>
    <property type="evidence" value="ECO:0007669"/>
    <property type="project" value="InterPro"/>
</dbReference>
<dbReference type="GO" id="GO:0006298">
    <property type="term" value="P:mismatch repair"/>
    <property type="evidence" value="ECO:0007669"/>
    <property type="project" value="UniProtKB-UniRule"/>
</dbReference>
<dbReference type="CDD" id="cd03284">
    <property type="entry name" value="ABC_MutS1"/>
    <property type="match status" value="1"/>
</dbReference>
<dbReference type="FunFam" id="1.10.1420.10:FF:000002">
    <property type="entry name" value="DNA mismatch repair protein MutS"/>
    <property type="match status" value="1"/>
</dbReference>
<dbReference type="FunFam" id="3.30.420.110:FF:000001">
    <property type="entry name" value="DNA mismatch repair protein MutS"/>
    <property type="match status" value="1"/>
</dbReference>
<dbReference type="FunFam" id="3.40.1170.10:FF:000001">
    <property type="entry name" value="DNA mismatch repair protein MutS"/>
    <property type="match status" value="1"/>
</dbReference>
<dbReference type="FunFam" id="3.40.50.300:FF:000283">
    <property type="entry name" value="DNA mismatch repair protein MutS"/>
    <property type="match status" value="1"/>
</dbReference>
<dbReference type="Gene3D" id="1.10.1420.10">
    <property type="match status" value="2"/>
</dbReference>
<dbReference type="Gene3D" id="6.10.140.430">
    <property type="match status" value="1"/>
</dbReference>
<dbReference type="Gene3D" id="3.40.1170.10">
    <property type="entry name" value="DNA repair protein MutS, domain I"/>
    <property type="match status" value="1"/>
</dbReference>
<dbReference type="Gene3D" id="3.30.420.110">
    <property type="entry name" value="MutS, connector domain"/>
    <property type="match status" value="1"/>
</dbReference>
<dbReference type="Gene3D" id="3.40.50.300">
    <property type="entry name" value="P-loop containing nucleotide triphosphate hydrolases"/>
    <property type="match status" value="1"/>
</dbReference>
<dbReference type="HAMAP" id="MF_00096">
    <property type="entry name" value="MutS"/>
    <property type="match status" value="1"/>
</dbReference>
<dbReference type="InterPro" id="IPR005748">
    <property type="entry name" value="DNA_mismatch_repair_MutS"/>
</dbReference>
<dbReference type="InterPro" id="IPR007695">
    <property type="entry name" value="DNA_mismatch_repair_MutS-lik_N"/>
</dbReference>
<dbReference type="InterPro" id="IPR017261">
    <property type="entry name" value="DNA_mismatch_repair_MutS/MSH"/>
</dbReference>
<dbReference type="InterPro" id="IPR000432">
    <property type="entry name" value="DNA_mismatch_repair_MutS_C"/>
</dbReference>
<dbReference type="InterPro" id="IPR007861">
    <property type="entry name" value="DNA_mismatch_repair_MutS_clamp"/>
</dbReference>
<dbReference type="InterPro" id="IPR007696">
    <property type="entry name" value="DNA_mismatch_repair_MutS_core"/>
</dbReference>
<dbReference type="InterPro" id="IPR016151">
    <property type="entry name" value="DNA_mismatch_repair_MutS_N"/>
</dbReference>
<dbReference type="InterPro" id="IPR036187">
    <property type="entry name" value="DNA_mismatch_repair_MutS_sf"/>
</dbReference>
<dbReference type="InterPro" id="IPR007860">
    <property type="entry name" value="DNA_mmatch_repair_MutS_con_dom"/>
</dbReference>
<dbReference type="InterPro" id="IPR045076">
    <property type="entry name" value="MutS"/>
</dbReference>
<dbReference type="InterPro" id="IPR036678">
    <property type="entry name" value="MutS_con_dom_sf"/>
</dbReference>
<dbReference type="InterPro" id="IPR027417">
    <property type="entry name" value="P-loop_NTPase"/>
</dbReference>
<dbReference type="NCBIfam" id="TIGR01070">
    <property type="entry name" value="mutS1"/>
    <property type="match status" value="1"/>
</dbReference>
<dbReference type="NCBIfam" id="NF003810">
    <property type="entry name" value="PRK05399.1"/>
    <property type="match status" value="1"/>
</dbReference>
<dbReference type="PANTHER" id="PTHR11361:SF34">
    <property type="entry name" value="DNA MISMATCH REPAIR PROTEIN MSH1, MITOCHONDRIAL"/>
    <property type="match status" value="1"/>
</dbReference>
<dbReference type="PANTHER" id="PTHR11361">
    <property type="entry name" value="DNA MISMATCH REPAIR PROTEIN MUTS FAMILY MEMBER"/>
    <property type="match status" value="1"/>
</dbReference>
<dbReference type="Pfam" id="PF01624">
    <property type="entry name" value="MutS_I"/>
    <property type="match status" value="1"/>
</dbReference>
<dbReference type="Pfam" id="PF05188">
    <property type="entry name" value="MutS_II"/>
    <property type="match status" value="1"/>
</dbReference>
<dbReference type="Pfam" id="PF05192">
    <property type="entry name" value="MutS_III"/>
    <property type="match status" value="1"/>
</dbReference>
<dbReference type="Pfam" id="PF05190">
    <property type="entry name" value="MutS_IV"/>
    <property type="match status" value="1"/>
</dbReference>
<dbReference type="Pfam" id="PF00488">
    <property type="entry name" value="MutS_V"/>
    <property type="match status" value="1"/>
</dbReference>
<dbReference type="PIRSF" id="PIRSF037677">
    <property type="entry name" value="DNA_mis_repair_Msh6"/>
    <property type="match status" value="1"/>
</dbReference>
<dbReference type="SMART" id="SM00534">
    <property type="entry name" value="MUTSac"/>
    <property type="match status" value="1"/>
</dbReference>
<dbReference type="SMART" id="SM00533">
    <property type="entry name" value="MUTSd"/>
    <property type="match status" value="1"/>
</dbReference>
<dbReference type="SUPFAM" id="SSF55271">
    <property type="entry name" value="DNA repair protein MutS, domain I"/>
    <property type="match status" value="1"/>
</dbReference>
<dbReference type="SUPFAM" id="SSF53150">
    <property type="entry name" value="DNA repair protein MutS, domain II"/>
    <property type="match status" value="1"/>
</dbReference>
<dbReference type="SUPFAM" id="SSF48334">
    <property type="entry name" value="DNA repair protein MutS, domain III"/>
    <property type="match status" value="1"/>
</dbReference>
<dbReference type="SUPFAM" id="SSF52540">
    <property type="entry name" value="P-loop containing nucleoside triphosphate hydrolases"/>
    <property type="match status" value="1"/>
</dbReference>
<dbReference type="PROSITE" id="PS00486">
    <property type="entry name" value="DNA_MISMATCH_REPAIR_2"/>
    <property type="match status" value="1"/>
</dbReference>
<feature type="chain" id="PRO_1000075556" description="DNA mismatch repair protein MutS">
    <location>
        <begin position="1"/>
        <end position="853"/>
    </location>
</feature>
<feature type="binding site" evidence="1">
    <location>
        <begin position="614"/>
        <end position="621"/>
    </location>
    <ligand>
        <name>ATP</name>
        <dbReference type="ChEBI" id="CHEBI:30616"/>
    </ligand>
</feature>
<evidence type="ECO:0000255" key="1">
    <source>
        <dbReference type="HAMAP-Rule" id="MF_00096"/>
    </source>
</evidence>
<gene>
    <name evidence="1" type="primary">mutS</name>
    <name type="ordered locus">EcolC_0979</name>
</gene>